<keyword id="KW-0963">Cytoplasm</keyword>
<keyword id="KW-0251">Elongation factor</keyword>
<keyword id="KW-0648">Protein biosynthesis</keyword>
<keyword id="KW-1185">Reference proteome</keyword>
<gene>
    <name evidence="1" type="primary">efp</name>
    <name type="ordered locus">SGO_1863</name>
</gene>
<reference key="1">
    <citation type="journal article" date="2007" name="J. Bacteriol.">
        <title>Genome-wide transcriptional changes in Streptococcus gordonii in response to competence signaling peptide.</title>
        <authorList>
            <person name="Vickerman M.M."/>
            <person name="Iobst S."/>
            <person name="Jesionowski A.M."/>
            <person name="Gill S.R."/>
        </authorList>
    </citation>
    <scope>NUCLEOTIDE SEQUENCE [LARGE SCALE GENOMIC DNA]</scope>
    <source>
        <strain>Challis / ATCC 35105 / BCRC 15272 / CH1 / DL1 / V288</strain>
    </source>
</reference>
<evidence type="ECO:0000255" key="1">
    <source>
        <dbReference type="HAMAP-Rule" id="MF_00141"/>
    </source>
</evidence>
<proteinExistence type="inferred from homology"/>
<name>EFP_STRGC</name>
<comment type="function">
    <text evidence="1">Involved in peptide bond synthesis. Stimulates efficient translation and peptide-bond synthesis on native or reconstituted 70S ribosomes in vitro. Probably functions indirectly by altering the affinity of the ribosome for aminoacyl-tRNA, thus increasing their reactivity as acceptors for peptidyl transferase.</text>
</comment>
<comment type="pathway">
    <text evidence="1">Protein biosynthesis; polypeptide chain elongation.</text>
</comment>
<comment type="subcellular location">
    <subcellularLocation>
        <location evidence="1">Cytoplasm</location>
    </subcellularLocation>
</comment>
<comment type="similarity">
    <text evidence="1">Belongs to the elongation factor P family.</text>
</comment>
<feature type="chain" id="PRO_1000076539" description="Elongation factor P">
    <location>
        <begin position="1"/>
        <end position="186"/>
    </location>
</feature>
<accession>A8AZB9</accession>
<protein>
    <recommendedName>
        <fullName evidence="1">Elongation factor P</fullName>
        <shortName evidence="1">EF-P</shortName>
    </recommendedName>
</protein>
<sequence length="186" mass="20654">MIEASKLKAGMTFETADGKLIRVLEASHHKPGKGNTIMRMKLRDVRTGSTFDTSYRPEEKFEQAIIETVPAQYLYQMDDTAYFMNTETYDQYEIPVVNVEDELKYILENSDVKIQFYGSEVIGVTVPTTVELVVTETQPSIKGATVTGSGKPATLETGLVVNVPDFIEVGQKLIINTAEGTYVSRA</sequence>
<dbReference type="EMBL" id="CP000725">
    <property type="protein sequence ID" value="ABV10761.1"/>
    <property type="molecule type" value="Genomic_DNA"/>
</dbReference>
<dbReference type="RefSeq" id="WP_009754238.1">
    <property type="nucleotide sequence ID" value="NC_009785.1"/>
</dbReference>
<dbReference type="SMR" id="A8AZB9"/>
<dbReference type="STRING" id="467705.SGO_1863"/>
<dbReference type="GeneID" id="93788139"/>
<dbReference type="KEGG" id="sgo:SGO_1863"/>
<dbReference type="eggNOG" id="COG0231">
    <property type="taxonomic scope" value="Bacteria"/>
</dbReference>
<dbReference type="HOGENOM" id="CLU_074944_3_0_9"/>
<dbReference type="UniPathway" id="UPA00345"/>
<dbReference type="Proteomes" id="UP000001131">
    <property type="component" value="Chromosome"/>
</dbReference>
<dbReference type="GO" id="GO:0005737">
    <property type="term" value="C:cytoplasm"/>
    <property type="evidence" value="ECO:0007669"/>
    <property type="project" value="UniProtKB-SubCell"/>
</dbReference>
<dbReference type="GO" id="GO:0003746">
    <property type="term" value="F:translation elongation factor activity"/>
    <property type="evidence" value="ECO:0007669"/>
    <property type="project" value="UniProtKB-UniRule"/>
</dbReference>
<dbReference type="GO" id="GO:0043043">
    <property type="term" value="P:peptide biosynthetic process"/>
    <property type="evidence" value="ECO:0007669"/>
    <property type="project" value="InterPro"/>
</dbReference>
<dbReference type="CDD" id="cd04470">
    <property type="entry name" value="S1_EF-P_repeat_1"/>
    <property type="match status" value="1"/>
</dbReference>
<dbReference type="CDD" id="cd05794">
    <property type="entry name" value="S1_EF-P_repeat_2"/>
    <property type="match status" value="1"/>
</dbReference>
<dbReference type="FunFam" id="2.30.30.30:FF:000003">
    <property type="entry name" value="Elongation factor P"/>
    <property type="match status" value="1"/>
</dbReference>
<dbReference type="FunFam" id="2.40.50.140:FF:000004">
    <property type="entry name" value="Elongation factor P"/>
    <property type="match status" value="1"/>
</dbReference>
<dbReference type="FunFam" id="2.40.50.140:FF:000009">
    <property type="entry name" value="Elongation factor P"/>
    <property type="match status" value="1"/>
</dbReference>
<dbReference type="Gene3D" id="2.30.30.30">
    <property type="match status" value="1"/>
</dbReference>
<dbReference type="Gene3D" id="2.40.50.140">
    <property type="entry name" value="Nucleic acid-binding proteins"/>
    <property type="match status" value="2"/>
</dbReference>
<dbReference type="HAMAP" id="MF_00141">
    <property type="entry name" value="EF_P"/>
    <property type="match status" value="1"/>
</dbReference>
<dbReference type="InterPro" id="IPR015365">
    <property type="entry name" value="Elong-fact-P_C"/>
</dbReference>
<dbReference type="InterPro" id="IPR012340">
    <property type="entry name" value="NA-bd_OB-fold"/>
</dbReference>
<dbReference type="InterPro" id="IPR014722">
    <property type="entry name" value="Rib_uL2_dom2"/>
</dbReference>
<dbReference type="InterPro" id="IPR020599">
    <property type="entry name" value="Transl_elong_fac_P/YeiP"/>
</dbReference>
<dbReference type="InterPro" id="IPR013185">
    <property type="entry name" value="Transl_elong_KOW-like"/>
</dbReference>
<dbReference type="InterPro" id="IPR001059">
    <property type="entry name" value="Transl_elong_P/YeiP_cen"/>
</dbReference>
<dbReference type="InterPro" id="IPR013852">
    <property type="entry name" value="Transl_elong_P/YeiP_CS"/>
</dbReference>
<dbReference type="InterPro" id="IPR011768">
    <property type="entry name" value="Transl_elongation_fac_P"/>
</dbReference>
<dbReference type="InterPro" id="IPR008991">
    <property type="entry name" value="Translation_prot_SH3-like_sf"/>
</dbReference>
<dbReference type="NCBIfam" id="TIGR00038">
    <property type="entry name" value="efp"/>
    <property type="match status" value="1"/>
</dbReference>
<dbReference type="NCBIfam" id="NF001810">
    <property type="entry name" value="PRK00529.1"/>
    <property type="match status" value="1"/>
</dbReference>
<dbReference type="PANTHER" id="PTHR30053">
    <property type="entry name" value="ELONGATION FACTOR P"/>
    <property type="match status" value="1"/>
</dbReference>
<dbReference type="PANTHER" id="PTHR30053:SF12">
    <property type="entry name" value="ELONGATION FACTOR P (EF-P) FAMILY PROTEIN"/>
    <property type="match status" value="1"/>
</dbReference>
<dbReference type="Pfam" id="PF01132">
    <property type="entry name" value="EFP"/>
    <property type="match status" value="1"/>
</dbReference>
<dbReference type="Pfam" id="PF08207">
    <property type="entry name" value="EFP_N"/>
    <property type="match status" value="1"/>
</dbReference>
<dbReference type="Pfam" id="PF09285">
    <property type="entry name" value="Elong-fact-P_C"/>
    <property type="match status" value="1"/>
</dbReference>
<dbReference type="PIRSF" id="PIRSF005901">
    <property type="entry name" value="EF-P"/>
    <property type="match status" value="1"/>
</dbReference>
<dbReference type="SMART" id="SM01185">
    <property type="entry name" value="EFP"/>
    <property type="match status" value="1"/>
</dbReference>
<dbReference type="SMART" id="SM00841">
    <property type="entry name" value="Elong-fact-P_C"/>
    <property type="match status" value="1"/>
</dbReference>
<dbReference type="SUPFAM" id="SSF50249">
    <property type="entry name" value="Nucleic acid-binding proteins"/>
    <property type="match status" value="2"/>
</dbReference>
<dbReference type="SUPFAM" id="SSF50104">
    <property type="entry name" value="Translation proteins SH3-like domain"/>
    <property type="match status" value="1"/>
</dbReference>
<dbReference type="PROSITE" id="PS01275">
    <property type="entry name" value="EFP"/>
    <property type="match status" value="1"/>
</dbReference>
<organism>
    <name type="scientific">Streptococcus gordonii (strain Challis / ATCC 35105 / BCRC 15272 / CH1 / DL1 / V288)</name>
    <dbReference type="NCBI Taxonomy" id="467705"/>
    <lineage>
        <taxon>Bacteria</taxon>
        <taxon>Bacillati</taxon>
        <taxon>Bacillota</taxon>
        <taxon>Bacilli</taxon>
        <taxon>Lactobacillales</taxon>
        <taxon>Streptococcaceae</taxon>
        <taxon>Streptococcus</taxon>
    </lineage>
</organism>